<reference key="1">
    <citation type="journal article" date="2008" name="J. Bacteriol.">
        <title>Complete genome sequence of the soil actinomycete Kocuria rhizophila.</title>
        <authorList>
            <person name="Takarada H."/>
            <person name="Sekine M."/>
            <person name="Kosugi H."/>
            <person name="Matsuo Y."/>
            <person name="Fujisawa T."/>
            <person name="Omata S."/>
            <person name="Kishi E."/>
            <person name="Shimizu A."/>
            <person name="Tsukatani N."/>
            <person name="Tanikawa S."/>
            <person name="Fujita N."/>
            <person name="Harayama S."/>
        </authorList>
    </citation>
    <scope>NUCLEOTIDE SEQUENCE [LARGE SCALE GENOMIC DNA]</scope>
    <source>
        <strain>ATCC 9341 / DSM 348 / NBRC 103217 / DC2201</strain>
    </source>
</reference>
<gene>
    <name evidence="1" type="primary">tsf</name>
    <name type="ordered locus">KRH_16240</name>
</gene>
<organism>
    <name type="scientific">Kocuria rhizophila (strain ATCC 9341 / DSM 348 / NBRC 103217 / DC2201)</name>
    <dbReference type="NCBI Taxonomy" id="378753"/>
    <lineage>
        <taxon>Bacteria</taxon>
        <taxon>Bacillati</taxon>
        <taxon>Actinomycetota</taxon>
        <taxon>Actinomycetes</taxon>
        <taxon>Micrococcales</taxon>
        <taxon>Micrococcaceae</taxon>
        <taxon>Kocuria</taxon>
    </lineage>
</organism>
<comment type="function">
    <text evidence="1">Associates with the EF-Tu.GDP complex and induces the exchange of GDP to GTP. It remains bound to the aminoacyl-tRNA.EF-Tu.GTP complex up to the GTP hydrolysis stage on the ribosome.</text>
</comment>
<comment type="subcellular location">
    <subcellularLocation>
        <location evidence="1">Cytoplasm</location>
    </subcellularLocation>
</comment>
<comment type="similarity">
    <text evidence="1">Belongs to the EF-Ts family.</text>
</comment>
<keyword id="KW-0963">Cytoplasm</keyword>
<keyword id="KW-0251">Elongation factor</keyword>
<keyword id="KW-0648">Protein biosynthesis</keyword>
<keyword id="KW-1185">Reference proteome</keyword>
<proteinExistence type="inferred from homology"/>
<name>EFTS_KOCRD</name>
<accession>B2GKT5</accession>
<dbReference type="EMBL" id="AP009152">
    <property type="protein sequence ID" value="BAG29971.1"/>
    <property type="molecule type" value="Genomic_DNA"/>
</dbReference>
<dbReference type="RefSeq" id="WP_012398692.1">
    <property type="nucleotide sequence ID" value="NZ_VECX01000008.1"/>
</dbReference>
<dbReference type="SMR" id="B2GKT5"/>
<dbReference type="STRING" id="378753.KRH_16240"/>
<dbReference type="KEGG" id="krh:KRH_16240"/>
<dbReference type="eggNOG" id="COG0264">
    <property type="taxonomic scope" value="Bacteria"/>
</dbReference>
<dbReference type="HOGENOM" id="CLU_047155_0_0_11"/>
<dbReference type="OrthoDB" id="9808348at2"/>
<dbReference type="Proteomes" id="UP000008838">
    <property type="component" value="Chromosome"/>
</dbReference>
<dbReference type="GO" id="GO:0005737">
    <property type="term" value="C:cytoplasm"/>
    <property type="evidence" value="ECO:0007669"/>
    <property type="project" value="UniProtKB-SubCell"/>
</dbReference>
<dbReference type="GO" id="GO:0003746">
    <property type="term" value="F:translation elongation factor activity"/>
    <property type="evidence" value="ECO:0007669"/>
    <property type="project" value="UniProtKB-UniRule"/>
</dbReference>
<dbReference type="CDD" id="cd14275">
    <property type="entry name" value="UBA_EF-Ts"/>
    <property type="match status" value="1"/>
</dbReference>
<dbReference type="FunFam" id="1.10.286.20:FF:000001">
    <property type="entry name" value="Elongation factor Ts"/>
    <property type="match status" value="1"/>
</dbReference>
<dbReference type="FunFam" id="1.10.8.10:FF:000001">
    <property type="entry name" value="Elongation factor Ts"/>
    <property type="match status" value="1"/>
</dbReference>
<dbReference type="Gene3D" id="1.10.286.20">
    <property type="match status" value="1"/>
</dbReference>
<dbReference type="Gene3D" id="1.10.8.10">
    <property type="entry name" value="DNA helicase RuvA subunit, C-terminal domain"/>
    <property type="match status" value="1"/>
</dbReference>
<dbReference type="Gene3D" id="3.30.479.20">
    <property type="entry name" value="Elongation factor Ts, dimerisation domain"/>
    <property type="match status" value="2"/>
</dbReference>
<dbReference type="HAMAP" id="MF_00050">
    <property type="entry name" value="EF_Ts"/>
    <property type="match status" value="1"/>
</dbReference>
<dbReference type="InterPro" id="IPR036402">
    <property type="entry name" value="EF-Ts_dimer_sf"/>
</dbReference>
<dbReference type="InterPro" id="IPR001816">
    <property type="entry name" value="Transl_elong_EFTs/EF1B"/>
</dbReference>
<dbReference type="InterPro" id="IPR014039">
    <property type="entry name" value="Transl_elong_EFTs/EF1B_dimer"/>
</dbReference>
<dbReference type="InterPro" id="IPR018101">
    <property type="entry name" value="Transl_elong_Ts_CS"/>
</dbReference>
<dbReference type="InterPro" id="IPR009060">
    <property type="entry name" value="UBA-like_sf"/>
</dbReference>
<dbReference type="NCBIfam" id="TIGR00116">
    <property type="entry name" value="tsf"/>
    <property type="match status" value="1"/>
</dbReference>
<dbReference type="PANTHER" id="PTHR11741">
    <property type="entry name" value="ELONGATION FACTOR TS"/>
    <property type="match status" value="1"/>
</dbReference>
<dbReference type="PANTHER" id="PTHR11741:SF0">
    <property type="entry name" value="ELONGATION FACTOR TS, MITOCHONDRIAL"/>
    <property type="match status" value="1"/>
</dbReference>
<dbReference type="Pfam" id="PF00889">
    <property type="entry name" value="EF_TS"/>
    <property type="match status" value="1"/>
</dbReference>
<dbReference type="SUPFAM" id="SSF54713">
    <property type="entry name" value="Elongation factor Ts (EF-Ts), dimerisation domain"/>
    <property type="match status" value="1"/>
</dbReference>
<dbReference type="SUPFAM" id="SSF46934">
    <property type="entry name" value="UBA-like"/>
    <property type="match status" value="1"/>
</dbReference>
<dbReference type="PROSITE" id="PS01126">
    <property type="entry name" value="EF_TS_1"/>
    <property type="match status" value="1"/>
</dbReference>
<dbReference type="PROSITE" id="PS01127">
    <property type="entry name" value="EF_TS_2"/>
    <property type="match status" value="1"/>
</dbReference>
<protein>
    <recommendedName>
        <fullName evidence="1">Elongation factor Ts</fullName>
        <shortName evidence="1">EF-Ts</shortName>
    </recommendedName>
</protein>
<evidence type="ECO:0000255" key="1">
    <source>
        <dbReference type="HAMAP-Rule" id="MF_00050"/>
    </source>
</evidence>
<sequence length="276" mass="29170">MANYTAADIKALRERTGAGMLDVKKALDEADGDAQKAQEIIRVKGLKGVTKREGRSTAEGIVLARTENNVGYMVEVNSETDFVAKSAPFVEFGNKVLDAAVAADAADLDALLAAEVDGKPISELVTETGALLGEKVVVRRVARVAGDHVAVYLHKTSKDLPAQVGVLLAVSGADAETAAHDVAVHIAAMSPAFLSEEDVPAETVENEKRVAEETARNEGKPEKIIPNIVQGRLKGYYKDVVLVDQDFAKDSKKSVGQVLSEAGATATAFARFRVGA</sequence>
<feature type="chain" id="PRO_1000116749" description="Elongation factor Ts">
    <location>
        <begin position="1"/>
        <end position="276"/>
    </location>
</feature>
<feature type="region of interest" description="Involved in Mg(2+) ion dislocation from EF-Tu" evidence="1">
    <location>
        <begin position="80"/>
        <end position="83"/>
    </location>
</feature>